<organism>
    <name type="scientific">Sus scrofa</name>
    <name type="common">Pig</name>
    <dbReference type="NCBI Taxonomy" id="9823"/>
    <lineage>
        <taxon>Eukaryota</taxon>
        <taxon>Metazoa</taxon>
        <taxon>Chordata</taxon>
        <taxon>Craniata</taxon>
        <taxon>Vertebrata</taxon>
        <taxon>Euteleostomi</taxon>
        <taxon>Mammalia</taxon>
        <taxon>Eutheria</taxon>
        <taxon>Laurasiatheria</taxon>
        <taxon>Artiodactyla</taxon>
        <taxon>Suina</taxon>
        <taxon>Suidae</taxon>
        <taxon>Sus</taxon>
    </lineage>
</organism>
<reference key="1">
    <citation type="journal article" date="1981" name="FEBS Lett.">
        <title>Amino acid sequence and heterogeneity of gastric inhibitory polypeptide (GIP).</title>
        <authorList>
            <person name="Joernvall H."/>
            <person name="Carlquist M."/>
            <person name="Kwauk S."/>
            <person name="Otte S.C."/>
            <person name="McIntosh C.H.S."/>
            <person name="Brown J.C."/>
            <person name="Mutt V."/>
        </authorList>
    </citation>
    <scope>PROTEIN SEQUENCE</scope>
</reference>
<reference key="2">
    <citation type="journal article" date="1993" name="Eur. J. Biochem.">
        <title>Isolation of three antibacterial peptides from pig intestine: gastric inhibitory polypeptide (7-42), diazepam-binding inhibitor (32-86) and a novel factor, peptide 3910.</title>
        <authorList>
            <person name="Agerberth B."/>
            <person name="Boman A."/>
            <person name="Andersson M."/>
            <person name="Joernvall H."/>
            <person name="Mutt V."/>
            <person name="Boman H.G."/>
        </authorList>
    </citation>
    <scope>PROTEIN SEQUENCE OF 7-42</scope>
    <source>
        <tissue>Intestine</tissue>
    </source>
</reference>
<comment type="function">
    <text>Potent stimulator of insulin secretion and relatively poor inhibitor of gastric acid secretion.</text>
</comment>
<comment type="subcellular location">
    <subcellularLocation>
        <location>Secreted</location>
    </subcellularLocation>
</comment>
<comment type="similarity">
    <text evidence="1">Belongs to the glucagon family.</text>
</comment>
<protein>
    <recommendedName>
        <fullName>Gastric inhibitory polypeptide</fullName>
        <shortName>GIP</shortName>
    </recommendedName>
    <alternativeName>
        <fullName>Glucose-dependent insulinotropic polypeptide</fullName>
    </alternativeName>
</protein>
<dbReference type="PIR" id="A01546">
    <property type="entry name" value="GIPG"/>
</dbReference>
<dbReference type="SMR" id="P01281"/>
<dbReference type="STRING" id="9823.ENSSSCP00000023744"/>
<dbReference type="PaxDb" id="9823-ENSSSCP00000023744"/>
<dbReference type="eggNOG" id="ENOG502S7ZH">
    <property type="taxonomic scope" value="Eukaryota"/>
</dbReference>
<dbReference type="HOGENOM" id="CLU_146415_0_0_1"/>
<dbReference type="InParanoid" id="P01281"/>
<dbReference type="Proteomes" id="UP000008227">
    <property type="component" value="Unplaced"/>
</dbReference>
<dbReference type="Proteomes" id="UP000314985">
    <property type="component" value="Unplaced"/>
</dbReference>
<dbReference type="Proteomes" id="UP000694570">
    <property type="component" value="Unplaced"/>
</dbReference>
<dbReference type="Proteomes" id="UP000694571">
    <property type="component" value="Unplaced"/>
</dbReference>
<dbReference type="Proteomes" id="UP000694720">
    <property type="component" value="Unplaced"/>
</dbReference>
<dbReference type="Proteomes" id="UP000694722">
    <property type="component" value="Unplaced"/>
</dbReference>
<dbReference type="Proteomes" id="UP000694723">
    <property type="component" value="Unplaced"/>
</dbReference>
<dbReference type="Proteomes" id="UP000694724">
    <property type="component" value="Unplaced"/>
</dbReference>
<dbReference type="Proteomes" id="UP000694725">
    <property type="component" value="Unplaced"/>
</dbReference>
<dbReference type="Proteomes" id="UP000694726">
    <property type="component" value="Unplaced"/>
</dbReference>
<dbReference type="Proteomes" id="UP000694727">
    <property type="component" value="Unplaced"/>
</dbReference>
<dbReference type="Proteomes" id="UP000694728">
    <property type="component" value="Unplaced"/>
</dbReference>
<dbReference type="GO" id="GO:0005576">
    <property type="term" value="C:extracellular region"/>
    <property type="evidence" value="ECO:0007669"/>
    <property type="project" value="UniProtKB-SubCell"/>
</dbReference>
<dbReference type="GO" id="GO:0005179">
    <property type="term" value="F:hormone activity"/>
    <property type="evidence" value="ECO:0007669"/>
    <property type="project" value="UniProtKB-KW"/>
</dbReference>
<dbReference type="GO" id="GO:0007189">
    <property type="term" value="P:adenylate cyclase-activating G protein-coupled receptor signaling pathway"/>
    <property type="evidence" value="ECO:0000314"/>
    <property type="project" value="BHF-UCL"/>
</dbReference>
<dbReference type="GO" id="GO:0038192">
    <property type="term" value="P:gastric inhibitory peptide signaling pathway"/>
    <property type="evidence" value="ECO:0000314"/>
    <property type="project" value="BHF-UCL"/>
</dbReference>
<dbReference type="GO" id="GO:0042304">
    <property type="term" value="P:regulation of fatty acid biosynthetic process"/>
    <property type="evidence" value="ECO:0007669"/>
    <property type="project" value="InterPro"/>
</dbReference>
<dbReference type="GO" id="GO:0050796">
    <property type="term" value="P:regulation of insulin secretion"/>
    <property type="evidence" value="ECO:0007669"/>
    <property type="project" value="InterPro"/>
</dbReference>
<dbReference type="GO" id="GO:0009749">
    <property type="term" value="P:response to glucose"/>
    <property type="evidence" value="ECO:0007669"/>
    <property type="project" value="InterPro"/>
</dbReference>
<dbReference type="Gene3D" id="6.10.250.590">
    <property type="match status" value="1"/>
</dbReference>
<dbReference type="InterPro" id="IPR039078">
    <property type="entry name" value="GIP"/>
</dbReference>
<dbReference type="InterPro" id="IPR000532">
    <property type="entry name" value="Glucagon_GIP_secretin_VIP"/>
</dbReference>
<dbReference type="PANTHER" id="PTHR15211:SF0">
    <property type="entry name" value="GASTRIC INHIBITORY POLYPEPTIDE"/>
    <property type="match status" value="1"/>
</dbReference>
<dbReference type="PANTHER" id="PTHR15211">
    <property type="entry name" value="GLUCOSE-DEPENDENT INSULINOTROPIC POLYPEPTIDE"/>
    <property type="match status" value="1"/>
</dbReference>
<dbReference type="Pfam" id="PF00123">
    <property type="entry name" value="Hormone_2"/>
    <property type="match status" value="1"/>
</dbReference>
<dbReference type="SMART" id="SM00070">
    <property type="entry name" value="GLUCA"/>
    <property type="match status" value="1"/>
</dbReference>
<dbReference type="PROSITE" id="PS00260">
    <property type="entry name" value="GLUCAGON"/>
    <property type="match status" value="1"/>
</dbReference>
<name>GIP_PIG</name>
<feature type="chain" id="PRO_0000148919" description="Gastric inhibitory polypeptide">
    <location>
        <begin position="1"/>
        <end position="42"/>
    </location>
</feature>
<feature type="sequence variant" description="In a second component.">
    <location>
        <begin position="41"/>
        <end position="42"/>
    </location>
</feature>
<gene>
    <name type="primary">GIP</name>
</gene>
<keyword id="KW-0903">Direct protein sequencing</keyword>
<keyword id="KW-0372">Hormone</keyword>
<keyword id="KW-1185">Reference proteome</keyword>
<keyword id="KW-0964">Secreted</keyword>
<accession>P01281</accession>
<sequence>YAEGTFISDYSIAMDKIRQQDFVNWLLAQKGKKSDWKHNITQ</sequence>
<evidence type="ECO:0000305" key="1"/>
<proteinExistence type="evidence at protein level"/>